<feature type="chain" id="PRO_0000272019" description="Bacilliredoxin SSP1241">
    <location>
        <begin position="1"/>
        <end position="145"/>
    </location>
</feature>
<keyword id="KW-1185">Reference proteome</keyword>
<reference key="1">
    <citation type="journal article" date="2005" name="Proc. Natl. Acad. Sci. U.S.A.">
        <title>Whole genome sequence of Staphylococcus saprophyticus reveals the pathogenesis of uncomplicated urinary tract infection.</title>
        <authorList>
            <person name="Kuroda M."/>
            <person name="Yamashita A."/>
            <person name="Hirakawa H."/>
            <person name="Kumano M."/>
            <person name="Morikawa K."/>
            <person name="Higashide M."/>
            <person name="Maruyama A."/>
            <person name="Inose Y."/>
            <person name="Matoba K."/>
            <person name="Toh H."/>
            <person name="Kuhara S."/>
            <person name="Hattori M."/>
            <person name="Ohta T."/>
        </authorList>
    </citation>
    <scope>NUCLEOTIDE SEQUENCE [LARGE SCALE GENOMIC DNA]</scope>
    <source>
        <strain>ATCC 15305 / DSM 20229 / NCIMB 8711 / NCTC 7292 / S-41</strain>
    </source>
</reference>
<sequence>MDLNFDLYMTDVVNQARNEIEEAGYEQLTSADEVDSVLKQEGTSLVMVNSVCGCAGGIARPAATHALHYDKLPDRLVTVFAGQDKEATQRARDYFEGYAPSSPSFALIKDGKVTEMIERHQIEGHDVMNVITQLQNLFDNYCVEK</sequence>
<gene>
    <name type="ordered locus">SSP1241</name>
</gene>
<dbReference type="EMBL" id="AP008934">
    <property type="protein sequence ID" value="BAE18386.1"/>
    <property type="molecule type" value="Genomic_DNA"/>
</dbReference>
<dbReference type="SMR" id="Q49XV9"/>
<dbReference type="GeneID" id="3617008"/>
<dbReference type="KEGG" id="ssp:SSP1241"/>
<dbReference type="PATRIC" id="fig|342451.11.peg.1242"/>
<dbReference type="eggNOG" id="ENOG502ZBVN">
    <property type="taxonomic scope" value="Bacteria"/>
</dbReference>
<dbReference type="HOGENOM" id="CLU_132521_0_0_9"/>
<dbReference type="OrthoDB" id="9793981at2"/>
<dbReference type="Proteomes" id="UP000006371">
    <property type="component" value="Chromosome"/>
</dbReference>
<dbReference type="GO" id="GO:0045454">
    <property type="term" value="P:cell redox homeostasis"/>
    <property type="evidence" value="ECO:0000250"/>
    <property type="project" value="UniProtKB"/>
</dbReference>
<dbReference type="Gene3D" id="3.40.30.10">
    <property type="entry name" value="Glutaredoxin"/>
    <property type="match status" value="1"/>
</dbReference>
<dbReference type="InterPro" id="IPR009474">
    <property type="entry name" value="BrxB/BrxA"/>
</dbReference>
<dbReference type="NCBIfam" id="TIGR04191">
    <property type="entry name" value="YphP_YqiW"/>
    <property type="match status" value="1"/>
</dbReference>
<dbReference type="PANTHER" id="PTHR40052:SF1">
    <property type="entry name" value="BACILLIREDOXIN BRXB"/>
    <property type="match status" value="1"/>
</dbReference>
<dbReference type="PANTHER" id="PTHR40052">
    <property type="entry name" value="UPF0403 PROTEIN YQIW-RELATED"/>
    <property type="match status" value="1"/>
</dbReference>
<dbReference type="Pfam" id="PF06491">
    <property type="entry name" value="Disulph_isomer"/>
    <property type="match status" value="1"/>
</dbReference>
<organism>
    <name type="scientific">Staphylococcus saprophyticus subsp. saprophyticus (strain ATCC 15305 / DSM 20229 / NCIMB 8711 / NCTC 7292 / S-41)</name>
    <dbReference type="NCBI Taxonomy" id="342451"/>
    <lineage>
        <taxon>Bacteria</taxon>
        <taxon>Bacillati</taxon>
        <taxon>Bacillota</taxon>
        <taxon>Bacilli</taxon>
        <taxon>Bacillales</taxon>
        <taxon>Staphylococcaceae</taxon>
        <taxon>Staphylococcus</taxon>
    </lineage>
</organism>
<proteinExistence type="inferred from homology"/>
<comment type="similarity">
    <text evidence="1">Belongs to the bacilliredoxin family.</text>
</comment>
<name>Y1241_STAS1</name>
<evidence type="ECO:0000305" key="1"/>
<accession>Q49XV9</accession>
<protein>
    <recommendedName>
        <fullName evidence="1">Bacilliredoxin SSP1241</fullName>
    </recommendedName>
</protein>